<name>WSD10_ARATH</name>
<comment type="function">
    <text evidence="2">Bifunctional wax ester synthase/diacylglycerol acyltransferase (By similarity). Involved in cuticular wax biosynthesis (By similarity).</text>
</comment>
<comment type="catalytic activity">
    <reaction evidence="2">
        <text>an acyl-CoA + a 1,2-diacyl-sn-glycerol = a triacyl-sn-glycerol + CoA</text>
        <dbReference type="Rhea" id="RHEA:10868"/>
        <dbReference type="ChEBI" id="CHEBI:17815"/>
        <dbReference type="ChEBI" id="CHEBI:57287"/>
        <dbReference type="ChEBI" id="CHEBI:58342"/>
        <dbReference type="ChEBI" id="CHEBI:64615"/>
        <dbReference type="EC" id="2.3.1.20"/>
    </reaction>
</comment>
<comment type="catalytic activity">
    <reaction evidence="2">
        <text>a long chain fatty alcohol + a fatty acyl-CoA = a wax ester + CoA</text>
        <dbReference type="Rhea" id="RHEA:38443"/>
        <dbReference type="ChEBI" id="CHEBI:10036"/>
        <dbReference type="ChEBI" id="CHEBI:17135"/>
        <dbReference type="ChEBI" id="CHEBI:57287"/>
        <dbReference type="ChEBI" id="CHEBI:77636"/>
        <dbReference type="EC" id="2.3.1.75"/>
    </reaction>
</comment>
<comment type="pathway">
    <text evidence="2">Glycerolipid metabolism; triacylglycerol biosynthesis.</text>
</comment>
<comment type="pathway">
    <text evidence="2">Lipid metabolism.</text>
</comment>
<comment type="subcellular location">
    <subcellularLocation>
        <location evidence="1">Cell membrane</location>
        <topology evidence="3">Single-pass membrane protein</topology>
    </subcellularLocation>
    <subcellularLocation>
        <location evidence="2">Endoplasmic reticulum membrane</location>
        <topology evidence="3">Single-pass membrane protein</topology>
    </subcellularLocation>
</comment>
<comment type="tissue specificity">
    <text evidence="5">Mostly expressed in roots.</text>
</comment>
<comment type="induction">
    <text evidence="5">Induced in roots during drought and salt stresses.</text>
</comment>
<comment type="similarity">
    <text evidence="7">In the N-terminal section; belongs to the long-chain O-acyltransferase family.</text>
</comment>
<comment type="sequence caution" evidence="7">
    <conflict type="erroneous gene model prediction">
        <sequence resource="EMBL-CDS" id="AED96346"/>
    </conflict>
</comment>
<proteinExistence type="evidence at transcript level"/>
<accession>Q9FK04</accession>
<accession>F4KJ46</accession>
<dbReference type="EC" id="2.3.1.20" evidence="2"/>
<dbReference type="EC" id="2.3.1.75" evidence="2"/>
<dbReference type="EMBL" id="AB013388">
    <property type="protein sequence ID" value="BAB09800.1"/>
    <property type="molecule type" value="Genomic_DNA"/>
</dbReference>
<dbReference type="EMBL" id="CP002688">
    <property type="protein sequence ID" value="AED96346.2"/>
    <property type="status" value="ALT_SEQ"/>
    <property type="molecule type" value="Genomic_DNA"/>
</dbReference>
<dbReference type="RefSeq" id="NP_001318794.1">
    <property type="nucleotide sequence ID" value="NM_001345053.1"/>
</dbReference>
<dbReference type="SMR" id="Q9FK04"/>
<dbReference type="STRING" id="3702.F4KJ46"/>
<dbReference type="GlyCosmos" id="Q9FK04">
    <property type="glycosylation" value="2 sites, No reported glycans"/>
</dbReference>
<dbReference type="GlyGen" id="Q9FK04">
    <property type="glycosylation" value="2 sites"/>
</dbReference>
<dbReference type="PaxDb" id="3702-AT5G53380.1"/>
<dbReference type="GeneID" id="835419"/>
<dbReference type="KEGG" id="ath:AT5G53380"/>
<dbReference type="Araport" id="AT5G53380"/>
<dbReference type="TAIR" id="AT5G53380"/>
<dbReference type="eggNOG" id="ENOG502QU8B">
    <property type="taxonomic scope" value="Eukaryota"/>
</dbReference>
<dbReference type="HOGENOM" id="CLU_027831_0_0_1"/>
<dbReference type="InParanoid" id="Q9FK04"/>
<dbReference type="PhylomeDB" id="Q9FK04"/>
<dbReference type="UniPathway" id="UPA00282"/>
<dbReference type="PRO" id="PR:Q9FK04"/>
<dbReference type="Proteomes" id="UP000006548">
    <property type="component" value="Chromosome 5"/>
</dbReference>
<dbReference type="ExpressionAtlas" id="Q9FK04">
    <property type="expression patterns" value="baseline and differential"/>
</dbReference>
<dbReference type="GO" id="GO:0005789">
    <property type="term" value="C:endoplasmic reticulum membrane"/>
    <property type="evidence" value="ECO:0007669"/>
    <property type="project" value="UniProtKB-SubCell"/>
</dbReference>
<dbReference type="GO" id="GO:0005886">
    <property type="term" value="C:plasma membrane"/>
    <property type="evidence" value="ECO:0000318"/>
    <property type="project" value="GO_Central"/>
</dbReference>
<dbReference type="GO" id="GO:0004144">
    <property type="term" value="F:diacylglycerol O-acyltransferase activity"/>
    <property type="evidence" value="ECO:0007669"/>
    <property type="project" value="UniProtKB-EC"/>
</dbReference>
<dbReference type="GO" id="GO:0047196">
    <property type="term" value="F:long-chain-alcohol O-fatty-acyltransferase activity"/>
    <property type="evidence" value="ECO:0007669"/>
    <property type="project" value="UniProtKB-EC"/>
</dbReference>
<dbReference type="GO" id="GO:0008374">
    <property type="term" value="F:O-acyltransferase activity"/>
    <property type="evidence" value="ECO:0000318"/>
    <property type="project" value="GO_Central"/>
</dbReference>
<dbReference type="GO" id="GO:0009651">
    <property type="term" value="P:response to salt stress"/>
    <property type="evidence" value="ECO:0000270"/>
    <property type="project" value="UniProtKB"/>
</dbReference>
<dbReference type="GO" id="GO:0009414">
    <property type="term" value="P:response to water deprivation"/>
    <property type="evidence" value="ECO:0000270"/>
    <property type="project" value="UniProtKB"/>
</dbReference>
<dbReference type="GO" id="GO:0019432">
    <property type="term" value="P:triglyceride biosynthetic process"/>
    <property type="evidence" value="ECO:0000318"/>
    <property type="project" value="GO_Central"/>
</dbReference>
<dbReference type="InterPro" id="IPR045034">
    <property type="entry name" value="O-acyltransferase_WSD1-like"/>
</dbReference>
<dbReference type="InterPro" id="IPR009721">
    <property type="entry name" value="O-acyltransferase_WSD1_C"/>
</dbReference>
<dbReference type="InterPro" id="IPR004255">
    <property type="entry name" value="O-acyltransferase_WSD1_N"/>
</dbReference>
<dbReference type="PANTHER" id="PTHR31650">
    <property type="entry name" value="O-ACYLTRANSFERASE (WSD1-LIKE) FAMILY PROTEIN"/>
    <property type="match status" value="1"/>
</dbReference>
<dbReference type="PANTHER" id="PTHR31650:SF44">
    <property type="entry name" value="WAX ESTER SYNTHASE_DIACYLGLYCEROL ACYLTRANSFERASE 10-RELATED"/>
    <property type="match status" value="1"/>
</dbReference>
<dbReference type="Pfam" id="PF06974">
    <property type="entry name" value="WS_DGAT_C"/>
    <property type="match status" value="1"/>
</dbReference>
<dbReference type="Pfam" id="PF03007">
    <property type="entry name" value="WS_DGAT_cat"/>
    <property type="match status" value="1"/>
</dbReference>
<dbReference type="SUPFAM" id="SSF52777">
    <property type="entry name" value="CoA-dependent acyltransferases"/>
    <property type="match status" value="1"/>
</dbReference>
<sequence length="483" mass="54280">MTKEEVEEEPLSPMARLFQSPGIENCIITMIGFKAKINPDIILDDLKHNVSKHPRFCSKLVIATHTNYDGERWMKTKVNVEDHVFVPDIDLQEINKDGDGFVDDYVSRLTLSPLDKSKPLWDIHILNVKTSDAEAVGVMRCHHSLADGMSLMSLLVACTRKTSNLESFPTIPAIKRREQMMSHRFGNKGWYSRSINAVYYAVRLIWNTIVDLLLLWATSLFFKDTETPISEGIGSGNNARRFYHRTVSLDDIKLIKNAMKMTINDVLLGVTQDALSRYLNQRYGDKNGEGVTTTSNLNNLPGKIRIRAGVAVNLRQDIGIQPLEDMLAKDSKCRWGNYDSLVFVPFSISLETDPLVPLLKAKSIMDRKKHSLVAPMHYSIIEFIINTFGTKVFNRTCSNTTTILSNIVGPVEEVSLHGNCITYIALTGYGHSQALMIHFISYANKMIITIAVDPAVIPDPHNICDEMEKSLKAMKDTLSGKSD</sequence>
<protein>
    <recommendedName>
        <fullName evidence="6">Wax ester synthase/diacylglycerol acyltransferase 10</fullName>
        <shortName evidence="6">WS/DGAT 10</shortName>
    </recommendedName>
    <alternativeName>
        <fullName evidence="6">Diacylglycerol O-acyltransferase WSD10</fullName>
        <ecNumber evidence="2">2.3.1.20</ecNumber>
    </alternativeName>
    <alternativeName>
        <fullName evidence="6">Long-chain-alcohol O-fatty-acyltransferase WSD10</fullName>
        <ecNumber evidence="2">2.3.1.75</ecNumber>
    </alternativeName>
</protein>
<keyword id="KW-0012">Acyltransferase</keyword>
<keyword id="KW-1003">Cell membrane</keyword>
<keyword id="KW-0256">Endoplasmic reticulum</keyword>
<keyword id="KW-0325">Glycoprotein</keyword>
<keyword id="KW-0472">Membrane</keyword>
<keyword id="KW-1185">Reference proteome</keyword>
<keyword id="KW-0346">Stress response</keyword>
<keyword id="KW-0808">Transferase</keyword>
<keyword id="KW-0812">Transmembrane</keyword>
<keyword id="KW-1133">Transmembrane helix</keyword>
<feature type="chain" id="PRO_0000452620" description="Wax ester synthase/diacylglycerol acyltransferase 10">
    <location>
        <begin position="1"/>
        <end position="483"/>
    </location>
</feature>
<feature type="topological domain" description="Cytoplasmic" evidence="7">
    <location>
        <begin position="1"/>
        <end position="203"/>
    </location>
</feature>
<feature type="transmembrane region" description="Helical" evidence="3">
    <location>
        <begin position="204"/>
        <end position="222"/>
    </location>
</feature>
<feature type="topological domain" description="Lumenal" evidence="7">
    <location>
        <begin position="223"/>
        <end position="483"/>
    </location>
</feature>
<feature type="active site" description="Proton acceptor" evidence="3">
    <location>
        <position position="143"/>
    </location>
</feature>
<feature type="glycosylation site" description="N-linked (GlcNAc...) asparagine" evidence="4">
    <location>
        <position position="394"/>
    </location>
</feature>
<feature type="glycosylation site" description="N-linked (GlcNAc...) asparagine" evidence="4">
    <location>
        <position position="399"/>
    </location>
</feature>
<reference key="1">
    <citation type="journal article" date="1998" name="DNA Res.">
        <title>Structural analysis of Arabidopsis thaliana chromosome 5. VI. Sequence features of the regions of 1,367,185 bp covered by 19 physically assigned P1 and TAC clones.</title>
        <authorList>
            <person name="Kotani H."/>
            <person name="Nakamura Y."/>
            <person name="Sato S."/>
            <person name="Asamizu E."/>
            <person name="Kaneko T."/>
            <person name="Miyajima N."/>
            <person name="Tabata S."/>
        </authorList>
    </citation>
    <scope>NUCLEOTIDE SEQUENCE [LARGE SCALE GENOMIC DNA]</scope>
    <source>
        <strain>cv. Columbia</strain>
    </source>
</reference>
<reference key="2">
    <citation type="journal article" date="2017" name="Plant J.">
        <title>Araport11: a complete reannotation of the Arabidopsis thaliana reference genome.</title>
        <authorList>
            <person name="Cheng C.Y."/>
            <person name="Krishnakumar V."/>
            <person name="Chan A.P."/>
            <person name="Thibaud-Nissen F."/>
            <person name="Schobel S."/>
            <person name="Town C.D."/>
        </authorList>
    </citation>
    <scope>GENOME REANNOTATION</scope>
    <source>
        <strain>cv. Columbia</strain>
    </source>
</reference>
<reference key="3">
    <citation type="journal article" date="2003" name="J. Biol. Chem.">
        <title>A novel bifunctional wax ester synthase/acyl-CoA:diacylglycerol acyltransferase mediates wax ester and triacylglycerol biosynthesis in Acinetobacter calcoaceticus ADP1.</title>
        <authorList>
            <person name="Kalscheuer R."/>
            <person name="Steinbuchel A."/>
        </authorList>
    </citation>
    <scope>GENE FAMILY</scope>
</reference>
<reference key="4">
    <citation type="journal article" date="2008" name="Plant Physiol.">
        <title>Identification of the wax ester synthase/acyl-coenzyme A: diacylglycerol acyltransferase WSD1 required for stem wax ester biosynthesis in Arabidopsis.</title>
        <authorList>
            <person name="Li F."/>
            <person name="Wu X."/>
            <person name="Lam P."/>
            <person name="Bird D."/>
            <person name="Zheng H."/>
            <person name="Samuels A.L."/>
            <person name="Jetter R."/>
            <person name="Kunst L."/>
        </authorList>
    </citation>
    <scope>GENE FAMILY</scope>
    <scope>NOMENCLATURE</scope>
</reference>
<reference key="5">
    <citation type="journal article" date="2013" name="Arabidopsis Book">
        <title>Acyl-lipid metabolism.</title>
        <authorList>
            <person name="Li-Beisson Y."/>
            <person name="Shorrosh B."/>
            <person name="Beisson F."/>
            <person name="Andersson M.X."/>
            <person name="Arondel V."/>
            <person name="Bates P.D."/>
            <person name="Baud S."/>
            <person name="Bird D."/>
            <person name="Debono A."/>
            <person name="Durrett T.P."/>
            <person name="Franke R.B."/>
            <person name="Graham I.A."/>
            <person name="Katayama K."/>
            <person name="Kelly A.A."/>
            <person name="Larson T."/>
            <person name="Markham J.E."/>
            <person name="Miquel M."/>
            <person name="Molina I."/>
            <person name="Nishida I."/>
            <person name="Rowland O."/>
            <person name="Samuels L."/>
            <person name="Schmid K.M."/>
            <person name="Wada H."/>
            <person name="Welti R."/>
            <person name="Xu C."/>
            <person name="Zallot R."/>
            <person name="Ohlrogge J."/>
        </authorList>
    </citation>
    <scope>REVIEW ON ACYL-LIPID METABOLISM</scope>
</reference>
<reference key="6">
    <citation type="journal article" date="2019" name="Plant J.">
        <title>Surface wax esters contribute to drought tolerance in Arabidopsis.</title>
        <authorList>
            <person name="Patwari P."/>
            <person name="Salewski V."/>
            <person name="Gutbrod K."/>
            <person name="Kreszies T."/>
            <person name="Dresen-Scholz B."/>
            <person name="Peisker H."/>
            <person name="Steiner U."/>
            <person name="Meyer A.J."/>
            <person name="Schreiber L."/>
            <person name="Doermann P."/>
        </authorList>
    </citation>
    <scope>TISSUE SPECIFICITY</scope>
    <source>
        <strain>cv. Columbia</strain>
    </source>
</reference>
<organism>
    <name type="scientific">Arabidopsis thaliana</name>
    <name type="common">Mouse-ear cress</name>
    <dbReference type="NCBI Taxonomy" id="3702"/>
    <lineage>
        <taxon>Eukaryota</taxon>
        <taxon>Viridiplantae</taxon>
        <taxon>Streptophyta</taxon>
        <taxon>Embryophyta</taxon>
        <taxon>Tracheophyta</taxon>
        <taxon>Spermatophyta</taxon>
        <taxon>Magnoliopsida</taxon>
        <taxon>eudicotyledons</taxon>
        <taxon>Gunneridae</taxon>
        <taxon>Pentapetalae</taxon>
        <taxon>rosids</taxon>
        <taxon>malvids</taxon>
        <taxon>Brassicales</taxon>
        <taxon>Brassicaceae</taxon>
        <taxon>Camelineae</taxon>
        <taxon>Arabidopsis</taxon>
    </lineage>
</organism>
<evidence type="ECO:0000250" key="1">
    <source>
        <dbReference type="UniProtKB" id="Q5KS41"/>
    </source>
</evidence>
<evidence type="ECO:0000250" key="2">
    <source>
        <dbReference type="UniProtKB" id="Q93ZR6"/>
    </source>
</evidence>
<evidence type="ECO:0000255" key="3"/>
<evidence type="ECO:0000255" key="4">
    <source>
        <dbReference type="PROSITE-ProRule" id="PRU00498"/>
    </source>
</evidence>
<evidence type="ECO:0000269" key="5">
    <source>
    </source>
</evidence>
<evidence type="ECO:0000303" key="6">
    <source>
    </source>
</evidence>
<evidence type="ECO:0000305" key="7"/>
<evidence type="ECO:0000312" key="8">
    <source>
        <dbReference type="Araport" id="AT5G53380"/>
    </source>
</evidence>
<evidence type="ECO:0000312" key="9">
    <source>
        <dbReference type="EMBL" id="BAB09800.1"/>
    </source>
</evidence>
<gene>
    <name evidence="6" type="primary">WSD10</name>
    <name evidence="8" type="ordered locus">At5g53380</name>
    <name evidence="9" type="ORF">K19E1.18</name>
</gene>